<name>XERS_STRMU</name>
<feature type="chain" id="PRO_0000095362" description="Tyrosine recombinase XerS">
    <location>
        <begin position="1"/>
        <end position="356"/>
    </location>
</feature>
<feature type="domain" description="Core-binding (CB)" evidence="3">
    <location>
        <begin position="16"/>
        <end position="121"/>
    </location>
</feature>
<feature type="domain" description="Tyr recombinase" evidence="2">
    <location>
        <begin position="169"/>
        <end position="354"/>
    </location>
</feature>
<feature type="active site" evidence="1">
    <location>
        <position position="210"/>
    </location>
</feature>
<feature type="active site" evidence="1">
    <location>
        <position position="234"/>
    </location>
</feature>
<feature type="active site" evidence="1">
    <location>
        <position position="306"/>
    </location>
</feature>
<feature type="active site" evidence="1">
    <location>
        <position position="309"/>
    </location>
</feature>
<feature type="active site" evidence="1">
    <location>
        <position position="332"/>
    </location>
</feature>
<feature type="active site" description="O-(3'-phospho-DNA)-tyrosine intermediate" evidence="1">
    <location>
        <position position="341"/>
    </location>
</feature>
<gene>
    <name evidence="1" type="primary">xerS</name>
    <name type="ordered locus">SMU_1034c</name>
</gene>
<accession>O69155</accession>
<accession>Q8DUA9</accession>
<comment type="function">
    <text evidence="1">Site-specific tyrosine recombinase, which acts by catalyzing the cutting and rejoining of the recombining DNA molecules. Essential to convert dimers of the bacterial chromosome into monomers to permit their segregation at cell division.</text>
</comment>
<comment type="activity regulation">
    <text evidence="1">FtsK is required for recombination.</text>
</comment>
<comment type="subcellular location">
    <subcellularLocation>
        <location evidence="1">Cytoplasm</location>
    </subcellularLocation>
</comment>
<comment type="similarity">
    <text evidence="1">Belongs to the 'phage' integrase family. XerS subfamily.</text>
</comment>
<protein>
    <recommendedName>
        <fullName evidence="1">Tyrosine recombinase XerS</fullName>
    </recommendedName>
</protein>
<sequence length="356" mass="41592">MRRELLLEKIDELKELMPWYVLEYYQSKLTVPYSFTTLYEYLKEYRRFFEWLIDSGVSNANKLADIPLETLEHLSKKDMESFILYLRERTLLNTKNKRQGVSQTTINRTLSALSSLYKYLTEEVENADGEPYFYRNVMKKVSTKKKKETLAARAENIKQKLFLGNETMEFLEYVDCEYEHKLSKRALSSFRKNKERDLAIIALLLASGVRLSEAVNLDLKDVNLNMMIIEVTRKGGKHDSVNVAGFAKPYLENYITIRRGRYKAKKTDLAFFLSEYRGVPNRMDASSIEKMVAKYSQDFKIRVTPHKLRHTLATRLYDATKSQVLVSHQLGHASTQVTDLYTHIVNDEQKNALDKL</sequence>
<organism>
    <name type="scientific">Streptococcus mutans serotype c (strain ATCC 700610 / UA159)</name>
    <dbReference type="NCBI Taxonomy" id="210007"/>
    <lineage>
        <taxon>Bacteria</taxon>
        <taxon>Bacillati</taxon>
        <taxon>Bacillota</taxon>
        <taxon>Bacilli</taxon>
        <taxon>Lactobacillales</taxon>
        <taxon>Streptococcaceae</taxon>
        <taxon>Streptococcus</taxon>
    </lineage>
</organism>
<reference key="1">
    <citation type="journal article" date="2000" name="FEMS Microbiol. Lett.">
        <title>Tn917-lac mutagenesis of Streptococcus mutans to identify environmentally regulated genes.</title>
        <authorList>
            <person name="Cvitkovitch D.G."/>
            <person name="Gutierrez J.A."/>
            <person name="Behari J."/>
            <person name="Youngman P.J."/>
            <person name="Wetz J.E. Jr."/>
            <person name="Crowley P.J."/>
            <person name="Hillman J.D."/>
            <person name="Brady L.J."/>
            <person name="Bleiweis A.S."/>
        </authorList>
    </citation>
    <scope>NUCLEOTIDE SEQUENCE [GENOMIC DNA]</scope>
    <source>
        <strain>NG8</strain>
    </source>
</reference>
<reference key="2">
    <citation type="journal article" date="2002" name="Proc. Natl. Acad. Sci. U.S.A.">
        <title>Genome sequence of Streptococcus mutans UA159, a cariogenic dental pathogen.</title>
        <authorList>
            <person name="Ajdic D.J."/>
            <person name="McShan W.M."/>
            <person name="McLaughlin R.E."/>
            <person name="Savic G."/>
            <person name="Chang J."/>
            <person name="Carson M.B."/>
            <person name="Primeaux C."/>
            <person name="Tian R."/>
            <person name="Kenton S."/>
            <person name="Jia H.G."/>
            <person name="Lin S.P."/>
            <person name="Qian Y."/>
            <person name="Li S."/>
            <person name="Zhu H."/>
            <person name="Najar F.Z."/>
            <person name="Lai H."/>
            <person name="White J."/>
            <person name="Roe B.A."/>
            <person name="Ferretti J.J."/>
        </authorList>
    </citation>
    <scope>NUCLEOTIDE SEQUENCE [LARGE SCALE GENOMIC DNA]</scope>
    <source>
        <strain>ATCC 700610 / UA159</strain>
    </source>
</reference>
<keyword id="KW-0131">Cell cycle</keyword>
<keyword id="KW-0132">Cell division</keyword>
<keyword id="KW-0159">Chromosome partition</keyword>
<keyword id="KW-0963">Cytoplasm</keyword>
<keyword id="KW-0229">DNA integration</keyword>
<keyword id="KW-0233">DNA recombination</keyword>
<keyword id="KW-0238">DNA-binding</keyword>
<keyword id="KW-1185">Reference proteome</keyword>
<evidence type="ECO:0000255" key="1">
    <source>
        <dbReference type="HAMAP-Rule" id="MF_01816"/>
    </source>
</evidence>
<evidence type="ECO:0000255" key="2">
    <source>
        <dbReference type="PROSITE-ProRule" id="PRU01246"/>
    </source>
</evidence>
<evidence type="ECO:0000255" key="3">
    <source>
        <dbReference type="PROSITE-ProRule" id="PRU01248"/>
    </source>
</evidence>
<proteinExistence type="inferred from homology"/>
<dbReference type="EMBL" id="AF065141">
    <property type="protein sequence ID" value="AAC17173.1"/>
    <property type="molecule type" value="Genomic_DNA"/>
</dbReference>
<dbReference type="EMBL" id="AE014133">
    <property type="protein sequence ID" value="AAN58733.1"/>
    <property type="molecule type" value="Genomic_DNA"/>
</dbReference>
<dbReference type="RefSeq" id="NP_721427.1">
    <property type="nucleotide sequence ID" value="NC_004350.2"/>
</dbReference>
<dbReference type="RefSeq" id="WP_002262304.1">
    <property type="nucleotide sequence ID" value="NC_004350.2"/>
</dbReference>
<dbReference type="SMR" id="O69155"/>
<dbReference type="STRING" id="210007.SMU_1034c"/>
<dbReference type="KEGG" id="smu:SMU_1034c"/>
<dbReference type="PATRIC" id="fig|210007.7.peg.924"/>
<dbReference type="eggNOG" id="COG4974">
    <property type="taxonomic scope" value="Bacteria"/>
</dbReference>
<dbReference type="HOGENOM" id="CLU_027562_9_6_9"/>
<dbReference type="OrthoDB" id="283809at2"/>
<dbReference type="PhylomeDB" id="O69155"/>
<dbReference type="Proteomes" id="UP000002512">
    <property type="component" value="Chromosome"/>
</dbReference>
<dbReference type="GO" id="GO:0005737">
    <property type="term" value="C:cytoplasm"/>
    <property type="evidence" value="ECO:0007669"/>
    <property type="project" value="UniProtKB-SubCell"/>
</dbReference>
<dbReference type="GO" id="GO:0003677">
    <property type="term" value="F:DNA binding"/>
    <property type="evidence" value="ECO:0007669"/>
    <property type="project" value="UniProtKB-KW"/>
</dbReference>
<dbReference type="GO" id="GO:0009037">
    <property type="term" value="F:tyrosine-based site-specific recombinase activity"/>
    <property type="evidence" value="ECO:0007669"/>
    <property type="project" value="UniProtKB-UniRule"/>
</dbReference>
<dbReference type="GO" id="GO:0051301">
    <property type="term" value="P:cell division"/>
    <property type="evidence" value="ECO:0007669"/>
    <property type="project" value="UniProtKB-KW"/>
</dbReference>
<dbReference type="GO" id="GO:0007059">
    <property type="term" value="P:chromosome segregation"/>
    <property type="evidence" value="ECO:0007669"/>
    <property type="project" value="UniProtKB-UniRule"/>
</dbReference>
<dbReference type="GO" id="GO:0006310">
    <property type="term" value="P:DNA recombination"/>
    <property type="evidence" value="ECO:0007669"/>
    <property type="project" value="UniProtKB-UniRule"/>
</dbReference>
<dbReference type="CDD" id="cd00397">
    <property type="entry name" value="DNA_BRE_C"/>
    <property type="match status" value="1"/>
</dbReference>
<dbReference type="Gene3D" id="1.10.150.130">
    <property type="match status" value="1"/>
</dbReference>
<dbReference type="Gene3D" id="1.10.443.10">
    <property type="entry name" value="Intergrase catalytic core"/>
    <property type="match status" value="1"/>
</dbReference>
<dbReference type="HAMAP" id="MF_01816">
    <property type="entry name" value="Recomb_XerS"/>
    <property type="match status" value="1"/>
</dbReference>
<dbReference type="InterPro" id="IPR044068">
    <property type="entry name" value="CB"/>
</dbReference>
<dbReference type="InterPro" id="IPR011010">
    <property type="entry name" value="DNA_brk_join_enz"/>
</dbReference>
<dbReference type="InterPro" id="IPR013762">
    <property type="entry name" value="Integrase-like_cat_sf"/>
</dbReference>
<dbReference type="InterPro" id="IPR002104">
    <property type="entry name" value="Integrase_catalytic"/>
</dbReference>
<dbReference type="InterPro" id="IPR010998">
    <property type="entry name" value="Integrase_recombinase_N"/>
</dbReference>
<dbReference type="InterPro" id="IPR004107">
    <property type="entry name" value="Integrase_SAM-like_N"/>
</dbReference>
<dbReference type="InterPro" id="IPR023670">
    <property type="entry name" value="Recomb_XerS"/>
</dbReference>
<dbReference type="InterPro" id="IPR050090">
    <property type="entry name" value="Tyrosine_recombinase_XerCD"/>
</dbReference>
<dbReference type="NCBIfam" id="NF003462">
    <property type="entry name" value="PRK05084.1"/>
    <property type="match status" value="1"/>
</dbReference>
<dbReference type="PANTHER" id="PTHR30349">
    <property type="entry name" value="PHAGE INTEGRASE-RELATED"/>
    <property type="match status" value="1"/>
</dbReference>
<dbReference type="PANTHER" id="PTHR30349:SF77">
    <property type="entry name" value="TYROSINE RECOMBINASE XERC"/>
    <property type="match status" value="1"/>
</dbReference>
<dbReference type="Pfam" id="PF02899">
    <property type="entry name" value="Phage_int_SAM_1"/>
    <property type="match status" value="1"/>
</dbReference>
<dbReference type="Pfam" id="PF00589">
    <property type="entry name" value="Phage_integrase"/>
    <property type="match status" value="1"/>
</dbReference>
<dbReference type="SUPFAM" id="SSF56349">
    <property type="entry name" value="DNA breaking-rejoining enzymes"/>
    <property type="match status" value="1"/>
</dbReference>
<dbReference type="PROSITE" id="PS51900">
    <property type="entry name" value="CB"/>
    <property type="match status" value="1"/>
</dbReference>
<dbReference type="PROSITE" id="PS51898">
    <property type="entry name" value="TYR_RECOMBINASE"/>
    <property type="match status" value="1"/>
</dbReference>